<gene>
    <name evidence="1" type="primary">leuB</name>
    <name type="ordered locus">SERP1670</name>
</gene>
<keyword id="KW-0028">Amino-acid biosynthesis</keyword>
<keyword id="KW-0100">Branched-chain amino acid biosynthesis</keyword>
<keyword id="KW-0963">Cytoplasm</keyword>
<keyword id="KW-0432">Leucine biosynthesis</keyword>
<keyword id="KW-0460">Magnesium</keyword>
<keyword id="KW-0464">Manganese</keyword>
<keyword id="KW-0479">Metal-binding</keyword>
<keyword id="KW-0520">NAD</keyword>
<keyword id="KW-0560">Oxidoreductase</keyword>
<keyword id="KW-1185">Reference proteome</keyword>
<dbReference type="EC" id="1.1.1.85" evidence="1"/>
<dbReference type="EMBL" id="CP000029">
    <property type="protein sequence ID" value="AAW55017.1"/>
    <property type="molecule type" value="Genomic_DNA"/>
</dbReference>
<dbReference type="RefSeq" id="WP_002468993.1">
    <property type="nucleotide sequence ID" value="NC_002976.3"/>
</dbReference>
<dbReference type="SMR" id="Q5HMF8"/>
<dbReference type="STRING" id="176279.SERP1670"/>
<dbReference type="KEGG" id="ser:SERP1670"/>
<dbReference type="eggNOG" id="COG0473">
    <property type="taxonomic scope" value="Bacteria"/>
</dbReference>
<dbReference type="HOGENOM" id="CLU_031953_0_3_9"/>
<dbReference type="UniPathway" id="UPA00048">
    <property type="reaction ID" value="UER00072"/>
</dbReference>
<dbReference type="Proteomes" id="UP000000531">
    <property type="component" value="Chromosome"/>
</dbReference>
<dbReference type="GO" id="GO:0005829">
    <property type="term" value="C:cytosol"/>
    <property type="evidence" value="ECO:0007669"/>
    <property type="project" value="TreeGrafter"/>
</dbReference>
<dbReference type="GO" id="GO:0003862">
    <property type="term" value="F:3-isopropylmalate dehydrogenase activity"/>
    <property type="evidence" value="ECO:0007669"/>
    <property type="project" value="UniProtKB-UniRule"/>
</dbReference>
<dbReference type="GO" id="GO:0000287">
    <property type="term" value="F:magnesium ion binding"/>
    <property type="evidence" value="ECO:0007669"/>
    <property type="project" value="InterPro"/>
</dbReference>
<dbReference type="GO" id="GO:0051287">
    <property type="term" value="F:NAD binding"/>
    <property type="evidence" value="ECO:0007669"/>
    <property type="project" value="InterPro"/>
</dbReference>
<dbReference type="GO" id="GO:0009098">
    <property type="term" value="P:L-leucine biosynthetic process"/>
    <property type="evidence" value="ECO:0007669"/>
    <property type="project" value="UniProtKB-UniRule"/>
</dbReference>
<dbReference type="FunFam" id="3.40.718.10:FF:000006">
    <property type="entry name" value="3-isopropylmalate dehydrogenase"/>
    <property type="match status" value="1"/>
</dbReference>
<dbReference type="Gene3D" id="3.40.718.10">
    <property type="entry name" value="Isopropylmalate Dehydrogenase"/>
    <property type="match status" value="1"/>
</dbReference>
<dbReference type="HAMAP" id="MF_01033">
    <property type="entry name" value="LeuB_type1"/>
    <property type="match status" value="1"/>
</dbReference>
<dbReference type="InterPro" id="IPR019818">
    <property type="entry name" value="IsoCit/isopropylmalate_DH_CS"/>
</dbReference>
<dbReference type="InterPro" id="IPR024084">
    <property type="entry name" value="IsoPropMal-DH-like_dom"/>
</dbReference>
<dbReference type="InterPro" id="IPR004429">
    <property type="entry name" value="Isopropylmalate_DH"/>
</dbReference>
<dbReference type="NCBIfam" id="TIGR00169">
    <property type="entry name" value="leuB"/>
    <property type="match status" value="1"/>
</dbReference>
<dbReference type="PANTHER" id="PTHR42979">
    <property type="entry name" value="3-ISOPROPYLMALATE DEHYDROGENASE"/>
    <property type="match status" value="1"/>
</dbReference>
<dbReference type="PANTHER" id="PTHR42979:SF1">
    <property type="entry name" value="3-ISOPROPYLMALATE DEHYDROGENASE"/>
    <property type="match status" value="1"/>
</dbReference>
<dbReference type="Pfam" id="PF00180">
    <property type="entry name" value="Iso_dh"/>
    <property type="match status" value="1"/>
</dbReference>
<dbReference type="SMART" id="SM01329">
    <property type="entry name" value="Iso_dh"/>
    <property type="match status" value="1"/>
</dbReference>
<dbReference type="SUPFAM" id="SSF53659">
    <property type="entry name" value="Isocitrate/Isopropylmalate dehydrogenase-like"/>
    <property type="match status" value="1"/>
</dbReference>
<dbReference type="PROSITE" id="PS00470">
    <property type="entry name" value="IDH_IMDH"/>
    <property type="match status" value="1"/>
</dbReference>
<sequence length="347" mass="38505">MSYKIVALPGDGIGPEILSGTLELLKLISEKYHFEYHLESHHFGGVSIDYYGTPLTNETLQSCKNADAILLGAIGGPKWTDPNNRPEHGLLKLRKSLNLFANIRPTFVTKGASHLSPLKQDIVEGTDLVIVRELTSGIYFGEPSYVKKTEALDSLKYSSQEIERIVRIAFNLANRRRKKLTSVDKENVLSSSKLWRQIVNDVKKDYPEVEVNHMLVDACSMHLITQPTQFDVIVTENLFGDILSDEASVIPGSLGLSPSASFGQTGTRLYEPIHGSAPDIANEDKANPFGMVLSLALCLRESLNQNDAANELESIVYSFIQSNKTTADLGGQYRTSEIFKLLKEKYL</sequence>
<proteinExistence type="inferred from homology"/>
<protein>
    <recommendedName>
        <fullName evidence="1">3-isopropylmalate dehydrogenase</fullName>
        <ecNumber evidence="1">1.1.1.85</ecNumber>
    </recommendedName>
    <alternativeName>
        <fullName evidence="1">3-IPM-DH</fullName>
    </alternativeName>
    <alternativeName>
        <fullName evidence="1">Beta-IPM dehydrogenase</fullName>
        <shortName evidence="1">IMDH</shortName>
    </alternativeName>
</protein>
<evidence type="ECO:0000255" key="1">
    <source>
        <dbReference type="HAMAP-Rule" id="MF_01033"/>
    </source>
</evidence>
<comment type="function">
    <text evidence="1">Catalyzes the oxidation of 3-carboxy-2-hydroxy-4-methylpentanoate (3-isopropylmalate) to 3-carboxy-4-methyl-2-oxopentanoate. The product decarboxylates to 4-methyl-2 oxopentanoate.</text>
</comment>
<comment type="catalytic activity">
    <reaction evidence="1">
        <text>(2R,3S)-3-isopropylmalate + NAD(+) = 4-methyl-2-oxopentanoate + CO2 + NADH</text>
        <dbReference type="Rhea" id="RHEA:32271"/>
        <dbReference type="ChEBI" id="CHEBI:16526"/>
        <dbReference type="ChEBI" id="CHEBI:17865"/>
        <dbReference type="ChEBI" id="CHEBI:35121"/>
        <dbReference type="ChEBI" id="CHEBI:57540"/>
        <dbReference type="ChEBI" id="CHEBI:57945"/>
        <dbReference type="EC" id="1.1.1.85"/>
    </reaction>
</comment>
<comment type="cofactor">
    <cofactor evidence="1">
        <name>Mg(2+)</name>
        <dbReference type="ChEBI" id="CHEBI:18420"/>
    </cofactor>
    <cofactor evidence="1">
        <name>Mn(2+)</name>
        <dbReference type="ChEBI" id="CHEBI:29035"/>
    </cofactor>
    <text evidence="1">Binds 1 Mg(2+) or Mn(2+) ion per subunit.</text>
</comment>
<comment type="pathway">
    <text evidence="1">Amino-acid biosynthesis; L-leucine biosynthesis; L-leucine from 3-methyl-2-oxobutanoate: step 3/4.</text>
</comment>
<comment type="subunit">
    <text evidence="1">Homodimer.</text>
</comment>
<comment type="subcellular location">
    <subcellularLocation>
        <location evidence="1">Cytoplasm</location>
    </subcellularLocation>
</comment>
<comment type="similarity">
    <text evidence="1">Belongs to the isocitrate and isopropylmalate dehydrogenases family. LeuB type 1 subfamily.</text>
</comment>
<accession>Q5HMF8</accession>
<feature type="chain" id="PRO_0000083758" description="3-isopropylmalate dehydrogenase">
    <location>
        <begin position="1"/>
        <end position="347"/>
    </location>
</feature>
<feature type="binding site" evidence="1">
    <location>
        <begin position="76"/>
        <end position="87"/>
    </location>
    <ligand>
        <name>NAD(+)</name>
        <dbReference type="ChEBI" id="CHEBI:57540"/>
    </ligand>
</feature>
<feature type="binding site" evidence="1">
    <location>
        <position position="94"/>
    </location>
    <ligand>
        <name>substrate</name>
    </ligand>
</feature>
<feature type="binding site" evidence="1">
    <location>
        <position position="104"/>
    </location>
    <ligand>
        <name>substrate</name>
    </ligand>
</feature>
<feature type="binding site" evidence="1">
    <location>
        <position position="132"/>
    </location>
    <ligand>
        <name>substrate</name>
    </ligand>
</feature>
<feature type="binding site" evidence="1">
    <location>
        <position position="217"/>
    </location>
    <ligand>
        <name>Mg(2+)</name>
        <dbReference type="ChEBI" id="CHEBI:18420"/>
    </ligand>
</feature>
<feature type="binding site" evidence="1">
    <location>
        <position position="217"/>
    </location>
    <ligand>
        <name>substrate</name>
    </ligand>
</feature>
<feature type="binding site" evidence="1">
    <location>
        <position position="241"/>
    </location>
    <ligand>
        <name>Mg(2+)</name>
        <dbReference type="ChEBI" id="CHEBI:18420"/>
    </ligand>
</feature>
<feature type="binding site" evidence="1">
    <location>
        <position position="245"/>
    </location>
    <ligand>
        <name>Mg(2+)</name>
        <dbReference type="ChEBI" id="CHEBI:18420"/>
    </ligand>
</feature>
<feature type="binding site" evidence="1">
    <location>
        <begin position="275"/>
        <end position="287"/>
    </location>
    <ligand>
        <name>NAD(+)</name>
        <dbReference type="ChEBI" id="CHEBI:57540"/>
    </ligand>
</feature>
<feature type="site" description="Important for catalysis" evidence="1">
    <location>
        <position position="139"/>
    </location>
</feature>
<feature type="site" description="Important for catalysis" evidence="1">
    <location>
        <position position="185"/>
    </location>
</feature>
<name>LEU3_STAEQ</name>
<organism>
    <name type="scientific">Staphylococcus epidermidis (strain ATCC 35984 / DSM 28319 / BCRC 17069 / CCUG 31568 / BM 3577 / RP62A)</name>
    <dbReference type="NCBI Taxonomy" id="176279"/>
    <lineage>
        <taxon>Bacteria</taxon>
        <taxon>Bacillati</taxon>
        <taxon>Bacillota</taxon>
        <taxon>Bacilli</taxon>
        <taxon>Bacillales</taxon>
        <taxon>Staphylococcaceae</taxon>
        <taxon>Staphylococcus</taxon>
    </lineage>
</organism>
<reference key="1">
    <citation type="journal article" date="2005" name="J. Bacteriol.">
        <title>Insights on evolution of virulence and resistance from the complete genome analysis of an early methicillin-resistant Staphylococcus aureus strain and a biofilm-producing methicillin-resistant Staphylococcus epidermidis strain.</title>
        <authorList>
            <person name="Gill S.R."/>
            <person name="Fouts D.E."/>
            <person name="Archer G.L."/>
            <person name="Mongodin E.F."/>
            <person name="DeBoy R.T."/>
            <person name="Ravel J."/>
            <person name="Paulsen I.T."/>
            <person name="Kolonay J.F."/>
            <person name="Brinkac L.M."/>
            <person name="Beanan M.J."/>
            <person name="Dodson R.J."/>
            <person name="Daugherty S.C."/>
            <person name="Madupu R."/>
            <person name="Angiuoli S.V."/>
            <person name="Durkin A.S."/>
            <person name="Haft D.H."/>
            <person name="Vamathevan J.J."/>
            <person name="Khouri H."/>
            <person name="Utterback T.R."/>
            <person name="Lee C."/>
            <person name="Dimitrov G."/>
            <person name="Jiang L."/>
            <person name="Qin H."/>
            <person name="Weidman J."/>
            <person name="Tran K."/>
            <person name="Kang K.H."/>
            <person name="Hance I.R."/>
            <person name="Nelson K.E."/>
            <person name="Fraser C.M."/>
        </authorList>
    </citation>
    <scope>NUCLEOTIDE SEQUENCE [LARGE SCALE GENOMIC DNA]</scope>
    <source>
        <strain>ATCC 35984 / DSM 28319 / BCRC 17069 / CCUG 31568 / BM 3577 / RP62A</strain>
    </source>
</reference>